<name>RS8_VIBCH</name>
<gene>
    <name evidence="1" type="primary">rpsH</name>
    <name type="ordered locus">VC_2582</name>
</gene>
<feature type="chain" id="PRO_0000126519" description="Small ribosomal subunit protein uS8">
    <location>
        <begin position="1"/>
        <end position="130"/>
    </location>
</feature>
<comment type="function">
    <text evidence="1">One of the primary rRNA binding proteins, it binds directly to 16S rRNA central domain where it helps coordinate assembly of the platform of the 30S subunit.</text>
</comment>
<comment type="subunit">
    <text evidence="1">Part of the 30S ribosomal subunit. Contacts proteins S5 and S12.</text>
</comment>
<comment type="similarity">
    <text evidence="1">Belongs to the universal ribosomal protein uS8 family.</text>
</comment>
<evidence type="ECO:0000255" key="1">
    <source>
        <dbReference type="HAMAP-Rule" id="MF_01302"/>
    </source>
</evidence>
<evidence type="ECO:0000305" key="2"/>
<accession>Q9KNZ8</accession>
<protein>
    <recommendedName>
        <fullName evidence="1">Small ribosomal subunit protein uS8</fullName>
    </recommendedName>
    <alternativeName>
        <fullName evidence="2">30S ribosomal protein S8</fullName>
    </alternativeName>
</protein>
<proteinExistence type="inferred from homology"/>
<sequence length="130" mass="13982">MSMQDPISDMLTRIRNGQAANKVAVKMPSSKLKVAIAALLKAEGYIADFAVEGEVKAELEITLKYFQAKPVIEQIKRVSRPGLRVYKKKDELPSVMGGLGVAVVSTSKGLMSDRAARKAGLGGEIICYVA</sequence>
<dbReference type="EMBL" id="AE003852">
    <property type="protein sequence ID" value="AAF95723.1"/>
    <property type="molecule type" value="Genomic_DNA"/>
</dbReference>
<dbReference type="PIR" id="H82057">
    <property type="entry name" value="H82057"/>
</dbReference>
<dbReference type="RefSeq" id="NP_232210.1">
    <property type="nucleotide sequence ID" value="NC_002505.1"/>
</dbReference>
<dbReference type="RefSeq" id="WP_000062614.1">
    <property type="nucleotide sequence ID" value="NZ_LT906614.1"/>
</dbReference>
<dbReference type="SMR" id="Q9KNZ8"/>
<dbReference type="STRING" id="243277.VC_2582"/>
<dbReference type="DNASU" id="2615599"/>
<dbReference type="EnsemblBacteria" id="AAF95723">
    <property type="protein sequence ID" value="AAF95723"/>
    <property type="gene ID" value="VC_2582"/>
</dbReference>
<dbReference type="GeneID" id="94012766"/>
<dbReference type="KEGG" id="vch:VC_2582"/>
<dbReference type="PATRIC" id="fig|243277.26.peg.2461"/>
<dbReference type="eggNOG" id="COG0096">
    <property type="taxonomic scope" value="Bacteria"/>
</dbReference>
<dbReference type="HOGENOM" id="CLU_098428_0_0_6"/>
<dbReference type="Proteomes" id="UP000000584">
    <property type="component" value="Chromosome 1"/>
</dbReference>
<dbReference type="GO" id="GO:0022627">
    <property type="term" value="C:cytosolic small ribosomal subunit"/>
    <property type="evidence" value="ECO:0000318"/>
    <property type="project" value="GO_Central"/>
</dbReference>
<dbReference type="GO" id="GO:0019843">
    <property type="term" value="F:rRNA binding"/>
    <property type="evidence" value="ECO:0007669"/>
    <property type="project" value="UniProtKB-UniRule"/>
</dbReference>
<dbReference type="GO" id="GO:0003735">
    <property type="term" value="F:structural constituent of ribosome"/>
    <property type="evidence" value="ECO:0000318"/>
    <property type="project" value="GO_Central"/>
</dbReference>
<dbReference type="GO" id="GO:0006412">
    <property type="term" value="P:translation"/>
    <property type="evidence" value="ECO:0007669"/>
    <property type="project" value="UniProtKB-UniRule"/>
</dbReference>
<dbReference type="FunFam" id="3.30.1370.30:FF:000003">
    <property type="entry name" value="30S ribosomal protein S8"/>
    <property type="match status" value="1"/>
</dbReference>
<dbReference type="FunFam" id="3.30.1490.10:FF:000001">
    <property type="entry name" value="30S ribosomal protein S8"/>
    <property type="match status" value="1"/>
</dbReference>
<dbReference type="Gene3D" id="3.30.1370.30">
    <property type="match status" value="1"/>
</dbReference>
<dbReference type="Gene3D" id="3.30.1490.10">
    <property type="match status" value="1"/>
</dbReference>
<dbReference type="HAMAP" id="MF_01302_B">
    <property type="entry name" value="Ribosomal_uS8_B"/>
    <property type="match status" value="1"/>
</dbReference>
<dbReference type="InterPro" id="IPR000630">
    <property type="entry name" value="Ribosomal_uS8"/>
</dbReference>
<dbReference type="InterPro" id="IPR047863">
    <property type="entry name" value="Ribosomal_uS8_CS"/>
</dbReference>
<dbReference type="InterPro" id="IPR035987">
    <property type="entry name" value="Ribosomal_uS8_sf"/>
</dbReference>
<dbReference type="NCBIfam" id="NF001109">
    <property type="entry name" value="PRK00136.1"/>
    <property type="match status" value="1"/>
</dbReference>
<dbReference type="PANTHER" id="PTHR11758">
    <property type="entry name" value="40S RIBOSOMAL PROTEIN S15A"/>
    <property type="match status" value="1"/>
</dbReference>
<dbReference type="Pfam" id="PF00410">
    <property type="entry name" value="Ribosomal_S8"/>
    <property type="match status" value="1"/>
</dbReference>
<dbReference type="SUPFAM" id="SSF56047">
    <property type="entry name" value="Ribosomal protein S8"/>
    <property type="match status" value="1"/>
</dbReference>
<dbReference type="PROSITE" id="PS00053">
    <property type="entry name" value="RIBOSOMAL_S8"/>
    <property type="match status" value="1"/>
</dbReference>
<keyword id="KW-1185">Reference proteome</keyword>
<keyword id="KW-0687">Ribonucleoprotein</keyword>
<keyword id="KW-0689">Ribosomal protein</keyword>
<keyword id="KW-0694">RNA-binding</keyword>
<keyword id="KW-0699">rRNA-binding</keyword>
<organism>
    <name type="scientific">Vibrio cholerae serotype O1 (strain ATCC 39315 / El Tor Inaba N16961)</name>
    <dbReference type="NCBI Taxonomy" id="243277"/>
    <lineage>
        <taxon>Bacteria</taxon>
        <taxon>Pseudomonadati</taxon>
        <taxon>Pseudomonadota</taxon>
        <taxon>Gammaproteobacteria</taxon>
        <taxon>Vibrionales</taxon>
        <taxon>Vibrionaceae</taxon>
        <taxon>Vibrio</taxon>
    </lineage>
</organism>
<reference key="1">
    <citation type="journal article" date="2000" name="Nature">
        <title>DNA sequence of both chromosomes of the cholera pathogen Vibrio cholerae.</title>
        <authorList>
            <person name="Heidelberg J.F."/>
            <person name="Eisen J.A."/>
            <person name="Nelson W.C."/>
            <person name="Clayton R.A."/>
            <person name="Gwinn M.L."/>
            <person name="Dodson R.J."/>
            <person name="Haft D.H."/>
            <person name="Hickey E.K."/>
            <person name="Peterson J.D."/>
            <person name="Umayam L.A."/>
            <person name="Gill S.R."/>
            <person name="Nelson K.E."/>
            <person name="Read T.D."/>
            <person name="Tettelin H."/>
            <person name="Richardson D.L."/>
            <person name="Ermolaeva M.D."/>
            <person name="Vamathevan J.J."/>
            <person name="Bass S."/>
            <person name="Qin H."/>
            <person name="Dragoi I."/>
            <person name="Sellers P."/>
            <person name="McDonald L.A."/>
            <person name="Utterback T.R."/>
            <person name="Fleischmann R.D."/>
            <person name="Nierman W.C."/>
            <person name="White O."/>
            <person name="Salzberg S.L."/>
            <person name="Smith H.O."/>
            <person name="Colwell R.R."/>
            <person name="Mekalanos J.J."/>
            <person name="Venter J.C."/>
            <person name="Fraser C.M."/>
        </authorList>
    </citation>
    <scope>NUCLEOTIDE SEQUENCE [LARGE SCALE GENOMIC DNA]</scope>
    <source>
        <strain>ATCC 39315 / El Tor Inaba N16961</strain>
    </source>
</reference>